<feature type="initiator methionine" description="Removed" evidence="1">
    <location>
        <position position="1"/>
    </location>
</feature>
<feature type="chain" id="PRO_0000130826" description="Small ribosomal subunit protein eS4">
    <location>
        <begin position="2"/>
        <end position="263"/>
    </location>
</feature>
<feature type="domain" description="S4 RNA-binding">
    <location>
        <begin position="42"/>
        <end position="104"/>
    </location>
</feature>
<feature type="sequence conflict" description="In Ref. 1; AAH70591." evidence="2" ref="1">
    <original>S</original>
    <variation>A</variation>
    <location>
        <position position="116"/>
    </location>
</feature>
<sequence length="263" mass="29665">MARGPKKHLKRVAAPKHWMLDKLTGVFAPRPSTGPHKLRECLPLIIFLRNRLKYALTGDEVKKICMQRFIKIDGKVRTDITYPAGFMDVISIEKTGEHFRLVYDTKGRFAVHRITSEEAKYKLCKVRKTWVGTKGIPHLVTHDARTIRYPDPLIKVNDTIQIDLETGKITDFIKFDTGNLCMVTGGANLGRIGVITNRERHPGSFDVVHVKDANGNNFATRLSNIFVIGKGNKPWISLPRGKGIRLTIAEERDKRLAAKQSSG</sequence>
<comment type="function">
    <text evidence="1">Component of the small ribosomal subunit. The ribosome is a large ribonucleoprotein complex responsible for the synthesis of proteins in the cell.</text>
</comment>
<comment type="subunit">
    <text evidence="1">Component of the small ribosomal subunit.</text>
</comment>
<comment type="subcellular location">
    <subcellularLocation>
        <location evidence="1">Cytoplasm</location>
    </subcellularLocation>
</comment>
<comment type="similarity">
    <text evidence="2">Belongs to the eukaryotic ribosomal protein eS4 family.</text>
</comment>
<accession>P49401</accession>
<accession>Q3B893</accession>
<accession>Q6NRW9</accession>
<dbReference type="EMBL" id="BC070591">
    <property type="protein sequence ID" value="AAH70591.1"/>
    <property type="molecule type" value="mRNA"/>
</dbReference>
<dbReference type="EMBL" id="BC106700">
    <property type="protein sequence ID" value="AAI06701.1"/>
    <property type="molecule type" value="mRNA"/>
</dbReference>
<dbReference type="EMBL" id="X64206">
    <property type="status" value="NOT_ANNOTATED_CDS"/>
    <property type="molecule type" value="mRNA"/>
</dbReference>
<dbReference type="PIR" id="S22608">
    <property type="entry name" value="S22608"/>
</dbReference>
<dbReference type="RefSeq" id="NP_001084941.1">
    <property type="nucleotide sequence ID" value="NM_001091472.1"/>
</dbReference>
<dbReference type="RefSeq" id="NP_001090472.1">
    <property type="nucleotide sequence ID" value="NM_001097003.1"/>
</dbReference>
<dbReference type="RefSeq" id="XP_018087661.1">
    <property type="nucleotide sequence ID" value="XM_018232172.1"/>
</dbReference>
<dbReference type="PDB" id="7OYC">
    <property type="method" value="EM"/>
    <property type="resolution" value="2.40 A"/>
    <property type="chains" value="E2=1-263"/>
</dbReference>
<dbReference type="PDBsum" id="7OYC"/>
<dbReference type="EMDB" id="EMD-13113"/>
<dbReference type="SMR" id="P49401"/>
<dbReference type="BioGRID" id="101364">
    <property type="interactions" value="3"/>
</dbReference>
<dbReference type="IntAct" id="P49401">
    <property type="interactions" value="1"/>
</dbReference>
<dbReference type="DNASU" id="431998"/>
<dbReference type="GeneID" id="431998"/>
<dbReference type="GeneID" id="779385"/>
<dbReference type="KEGG" id="xla:431998"/>
<dbReference type="KEGG" id="xla:779385"/>
<dbReference type="AGR" id="Xenbase:XB-GENE-17346803"/>
<dbReference type="CTD" id="431998"/>
<dbReference type="CTD" id="779385"/>
<dbReference type="Xenbase" id="XB-GENE-17346803">
    <property type="gene designation" value="rps4x.L"/>
</dbReference>
<dbReference type="OMA" id="GHIQLNL"/>
<dbReference type="OrthoDB" id="1109245at2759"/>
<dbReference type="Proteomes" id="UP000186698">
    <property type="component" value="Chromosome 8L"/>
</dbReference>
<dbReference type="Proteomes" id="UP000186698">
    <property type="component" value="Chromosome 8S"/>
</dbReference>
<dbReference type="Bgee" id="431998">
    <property type="expression patterns" value="Expressed in testis and 19 other cell types or tissues"/>
</dbReference>
<dbReference type="GO" id="GO:0022627">
    <property type="term" value="C:cytosolic small ribosomal subunit"/>
    <property type="evidence" value="ECO:0000318"/>
    <property type="project" value="GO_Central"/>
</dbReference>
<dbReference type="GO" id="GO:0003723">
    <property type="term" value="F:RNA binding"/>
    <property type="evidence" value="ECO:0000318"/>
    <property type="project" value="GO_Central"/>
</dbReference>
<dbReference type="GO" id="GO:0019843">
    <property type="term" value="F:rRNA binding"/>
    <property type="evidence" value="ECO:0007669"/>
    <property type="project" value="UniProtKB-KW"/>
</dbReference>
<dbReference type="GO" id="GO:0003735">
    <property type="term" value="F:structural constituent of ribosome"/>
    <property type="evidence" value="ECO:0000318"/>
    <property type="project" value="GO_Central"/>
</dbReference>
<dbReference type="GO" id="GO:0006412">
    <property type="term" value="P:translation"/>
    <property type="evidence" value="ECO:0000318"/>
    <property type="project" value="GO_Central"/>
</dbReference>
<dbReference type="CDD" id="cd06087">
    <property type="entry name" value="KOW_RPS4"/>
    <property type="match status" value="1"/>
</dbReference>
<dbReference type="CDD" id="cd00165">
    <property type="entry name" value="S4"/>
    <property type="match status" value="1"/>
</dbReference>
<dbReference type="FunFam" id="2.30.30.30:FF:000005">
    <property type="entry name" value="40S ribosomal protein S4"/>
    <property type="match status" value="1"/>
</dbReference>
<dbReference type="FunFam" id="2.40.50.740:FF:000001">
    <property type="entry name" value="40S ribosomal protein S4"/>
    <property type="match status" value="1"/>
</dbReference>
<dbReference type="FunFam" id="3.10.290.10:FF:000051">
    <property type="entry name" value="40S ribosomal protein S4, X isoform"/>
    <property type="match status" value="1"/>
</dbReference>
<dbReference type="Gene3D" id="2.30.30.30">
    <property type="match status" value="1"/>
</dbReference>
<dbReference type="Gene3D" id="2.40.50.740">
    <property type="match status" value="1"/>
</dbReference>
<dbReference type="Gene3D" id="3.10.290.10">
    <property type="entry name" value="RNA-binding S4 domain"/>
    <property type="match status" value="1"/>
</dbReference>
<dbReference type="HAMAP" id="MF_00485">
    <property type="entry name" value="Ribosomal_eS4"/>
    <property type="match status" value="1"/>
</dbReference>
<dbReference type="InterPro" id="IPR005824">
    <property type="entry name" value="KOW"/>
</dbReference>
<dbReference type="InterPro" id="IPR014722">
    <property type="entry name" value="Rib_uL2_dom2"/>
</dbReference>
<dbReference type="InterPro" id="IPR000876">
    <property type="entry name" value="Ribosomal_eS4"/>
</dbReference>
<dbReference type="InterPro" id="IPR032277">
    <property type="entry name" value="Ribosomal_eS4_C"/>
</dbReference>
<dbReference type="InterPro" id="IPR013845">
    <property type="entry name" value="Ribosomal_eS4_central_region"/>
</dbReference>
<dbReference type="InterPro" id="IPR038237">
    <property type="entry name" value="Ribosomal_eS4_central_sf"/>
</dbReference>
<dbReference type="InterPro" id="IPR041982">
    <property type="entry name" value="Ribosomal_eS4_KOW"/>
</dbReference>
<dbReference type="InterPro" id="IPR013843">
    <property type="entry name" value="Ribosomal_eS4_N"/>
</dbReference>
<dbReference type="InterPro" id="IPR018199">
    <property type="entry name" value="Ribosomal_eS4_N_CS"/>
</dbReference>
<dbReference type="InterPro" id="IPR002942">
    <property type="entry name" value="S4_RNA-bd"/>
</dbReference>
<dbReference type="InterPro" id="IPR036986">
    <property type="entry name" value="S4_RNA-bd_sf"/>
</dbReference>
<dbReference type="PANTHER" id="PTHR11581">
    <property type="entry name" value="30S/40S RIBOSOMAL PROTEIN S4"/>
    <property type="match status" value="1"/>
</dbReference>
<dbReference type="PANTHER" id="PTHR11581:SF0">
    <property type="entry name" value="SMALL RIBOSOMAL SUBUNIT PROTEIN ES4"/>
    <property type="match status" value="1"/>
</dbReference>
<dbReference type="Pfam" id="PF16121">
    <property type="entry name" value="40S_S4_C"/>
    <property type="match status" value="1"/>
</dbReference>
<dbReference type="Pfam" id="PF00467">
    <property type="entry name" value="KOW"/>
    <property type="match status" value="1"/>
</dbReference>
<dbReference type="Pfam" id="PF00900">
    <property type="entry name" value="Ribosomal_S4e"/>
    <property type="match status" value="1"/>
</dbReference>
<dbReference type="Pfam" id="PF08071">
    <property type="entry name" value="RS4NT"/>
    <property type="match status" value="1"/>
</dbReference>
<dbReference type="PIRSF" id="PIRSF002116">
    <property type="entry name" value="Ribosomal_S4"/>
    <property type="match status" value="1"/>
</dbReference>
<dbReference type="SMART" id="SM00363">
    <property type="entry name" value="S4"/>
    <property type="match status" value="1"/>
</dbReference>
<dbReference type="PROSITE" id="PS00528">
    <property type="entry name" value="RIBOSOMAL_S4E"/>
    <property type="match status" value="1"/>
</dbReference>
<dbReference type="PROSITE" id="PS50889">
    <property type="entry name" value="S4"/>
    <property type="match status" value="1"/>
</dbReference>
<protein>
    <recommendedName>
        <fullName evidence="2">Small ribosomal subunit protein eS4</fullName>
    </recommendedName>
    <alternativeName>
        <fullName>40S ribosomal protein S4</fullName>
    </alternativeName>
</protein>
<evidence type="ECO:0000250" key="1">
    <source>
        <dbReference type="UniProtKB" id="P62701"/>
    </source>
</evidence>
<evidence type="ECO:0000305" key="2"/>
<keyword id="KW-0002">3D-structure</keyword>
<keyword id="KW-0963">Cytoplasm</keyword>
<keyword id="KW-1185">Reference proteome</keyword>
<keyword id="KW-0687">Ribonucleoprotein</keyword>
<keyword id="KW-0689">Ribosomal protein</keyword>
<keyword id="KW-0694">RNA-binding</keyword>
<keyword id="KW-0699">rRNA-binding</keyword>
<name>RS4_XENLA</name>
<organism>
    <name type="scientific">Xenopus laevis</name>
    <name type="common">African clawed frog</name>
    <dbReference type="NCBI Taxonomy" id="8355"/>
    <lineage>
        <taxon>Eukaryota</taxon>
        <taxon>Metazoa</taxon>
        <taxon>Chordata</taxon>
        <taxon>Craniata</taxon>
        <taxon>Vertebrata</taxon>
        <taxon>Euteleostomi</taxon>
        <taxon>Amphibia</taxon>
        <taxon>Batrachia</taxon>
        <taxon>Anura</taxon>
        <taxon>Pipoidea</taxon>
        <taxon>Pipidae</taxon>
        <taxon>Xenopodinae</taxon>
        <taxon>Xenopus</taxon>
        <taxon>Xenopus</taxon>
    </lineage>
</organism>
<proteinExistence type="evidence at protein level"/>
<gene>
    <name type="primary">rps4</name>
    <name type="synonym">rps4x</name>
</gene>
<reference key="1">
    <citation type="submission" date="2005-10" db="EMBL/GenBank/DDBJ databases">
        <authorList>
            <consortium name="NIH - Xenopus Gene Collection (XGC) project"/>
        </authorList>
    </citation>
    <scope>NUCLEOTIDE SEQUENCE [LARGE SCALE MRNA]</scope>
    <source>
        <tissue>Lung</tissue>
        <tissue>Ovary</tissue>
    </source>
</reference>
<reference key="2">
    <citation type="journal article" date="1992" name="Nucleic Acids Res.">
        <title>Analysis of mRNAs under translational control during Xenopus embryogenesis: isolation of new ribosomal protein clones.</title>
        <authorList>
            <person name="Loreni F."/>
            <person name="Francesconi A."/>
            <person name="Jappelli R."/>
            <person name="Amaldi F."/>
        </authorList>
    </citation>
    <scope>NUCLEOTIDE SEQUENCE [MRNA] OF 112-144</scope>
</reference>